<proteinExistence type="inferred from homology"/>
<gene>
    <name type="primary">RRT14</name>
    <name type="ORF">SCRG_05299</name>
</gene>
<evidence type="ECO:0000250" key="1"/>
<evidence type="ECO:0000250" key="2">
    <source>
        <dbReference type="UniProtKB" id="P40470"/>
    </source>
</evidence>
<evidence type="ECO:0000256" key="3">
    <source>
        <dbReference type="SAM" id="MobiDB-lite"/>
    </source>
</evidence>
<evidence type="ECO:0000305" key="4"/>
<reference key="1">
    <citation type="submission" date="2005-03" db="EMBL/GenBank/DDBJ databases">
        <title>Annotation of the Saccharomyces cerevisiae RM11-1a genome.</title>
        <authorList>
            <consortium name="The Broad Institute Genome Sequencing Platform"/>
            <person name="Birren B.W."/>
            <person name="Lander E.S."/>
            <person name="Galagan J.E."/>
            <person name="Nusbaum C."/>
            <person name="Devon K."/>
            <person name="Cuomo C."/>
            <person name="Jaffe D.B."/>
            <person name="Butler J."/>
            <person name="Alvarez P."/>
            <person name="Gnerre S."/>
            <person name="Grabherr M."/>
            <person name="Kleber M."/>
            <person name="Mauceli E.W."/>
            <person name="Brockman W."/>
            <person name="MacCallum I.A."/>
            <person name="Rounsley S."/>
            <person name="Young S.K."/>
            <person name="LaButti K."/>
            <person name="Pushparaj V."/>
            <person name="DeCaprio D."/>
            <person name="Crawford M."/>
            <person name="Koehrsen M."/>
            <person name="Engels R."/>
            <person name="Montgomery P."/>
            <person name="Pearson M."/>
            <person name="Howarth C."/>
            <person name="Larson L."/>
            <person name="Luoma S."/>
            <person name="White J."/>
            <person name="O'Leary S."/>
            <person name="Kodira C.D."/>
            <person name="Zeng Q."/>
            <person name="Yandava C."/>
            <person name="Alvarado L."/>
            <person name="Pratt S."/>
            <person name="Kruglyak L."/>
        </authorList>
    </citation>
    <scope>NUCLEOTIDE SEQUENCE [LARGE SCALE GENOMIC DNA]</scope>
    <source>
        <strain>RM11-1a</strain>
    </source>
</reference>
<feature type="chain" id="PRO_0000404350" description="Regulator of rDNA transcription 14">
    <location>
        <begin position="1"/>
        <end position="206"/>
    </location>
</feature>
<feature type="region of interest" description="Disordered" evidence="3">
    <location>
        <begin position="178"/>
        <end position="206"/>
    </location>
</feature>
<feature type="compositionally biased region" description="Acidic residues" evidence="3">
    <location>
        <begin position="197"/>
        <end position="206"/>
    </location>
</feature>
<feature type="modified residue" description="Phosphoserine" evidence="2">
    <location>
        <position position="197"/>
    </location>
</feature>
<feature type="modified residue" description="Phosphoserine" evidence="2">
    <location>
        <position position="202"/>
    </location>
</feature>
<feature type="modified residue" description="Phosphoserine" evidence="2">
    <location>
        <position position="203"/>
    </location>
</feature>
<keyword id="KW-0539">Nucleus</keyword>
<keyword id="KW-0597">Phosphoprotein</keyword>
<keyword id="KW-0804">Transcription</keyword>
<keyword id="KW-0805">Transcription regulation</keyword>
<name>RRT14_YEAS1</name>
<sequence length="206" mass="23764">MSSSLSQTSKYQATSVVNGLLSNLLPGVPKIRANNGKTSVNNGSKAQLIDRNLKKRVQLQNRDVHKIKKKCKLVKKKQVKKHKLDKEQLEQLAKHQVLKKHQQEGTLTDHERKYLNKLIKRNSQNLRSWDLEEEVRDELEDIQQSILKDTVSTANTDRSKRRRFKRKQFKEDIKGSDFVKDHRYPGLTPGLAPVGLSDEEDSSEED</sequence>
<accession>B3LTX4</accession>
<comment type="function">
    <text evidence="1">Involved in ribosome biogenesis, probably through modulation of rDNA transcription.</text>
</comment>
<comment type="subcellular location">
    <subcellularLocation>
        <location evidence="1">Nucleus</location>
        <location evidence="1">Nucleolus</location>
    </subcellularLocation>
</comment>
<comment type="similarity">
    <text evidence="4">Belongs to the RRT14 family.</text>
</comment>
<protein>
    <recommendedName>
        <fullName>Regulator of rDNA transcription 14</fullName>
    </recommendedName>
</protein>
<dbReference type="EMBL" id="CH408055">
    <property type="protein sequence ID" value="EDV09605.1"/>
    <property type="molecule type" value="Genomic_DNA"/>
</dbReference>
<dbReference type="HOGENOM" id="CLU_095038_0_0_1"/>
<dbReference type="OrthoDB" id="41058at4893"/>
<dbReference type="Proteomes" id="UP000008335">
    <property type="component" value="Unassembled WGS sequence"/>
</dbReference>
<dbReference type="GO" id="GO:0005730">
    <property type="term" value="C:nucleolus"/>
    <property type="evidence" value="ECO:0007669"/>
    <property type="project" value="UniProtKB-SubCell"/>
</dbReference>
<dbReference type="InterPro" id="IPR031404">
    <property type="entry name" value="Rrt14"/>
</dbReference>
<dbReference type="Pfam" id="PF17075">
    <property type="entry name" value="RRT14"/>
    <property type="match status" value="1"/>
</dbReference>
<organism>
    <name type="scientific">Saccharomyces cerevisiae (strain RM11-1a)</name>
    <name type="common">Baker's yeast</name>
    <dbReference type="NCBI Taxonomy" id="285006"/>
    <lineage>
        <taxon>Eukaryota</taxon>
        <taxon>Fungi</taxon>
        <taxon>Dikarya</taxon>
        <taxon>Ascomycota</taxon>
        <taxon>Saccharomycotina</taxon>
        <taxon>Saccharomycetes</taxon>
        <taxon>Saccharomycetales</taxon>
        <taxon>Saccharomycetaceae</taxon>
        <taxon>Saccharomyces</taxon>
    </lineage>
</organism>